<name>YKW2_SCHPO</name>
<proteinExistence type="inferred from homology"/>
<organism>
    <name type="scientific">Schizosaccharomyces pombe (strain 972 / ATCC 24843)</name>
    <name type="common">Fission yeast</name>
    <dbReference type="NCBI Taxonomy" id="284812"/>
    <lineage>
        <taxon>Eukaryota</taxon>
        <taxon>Fungi</taxon>
        <taxon>Dikarya</taxon>
        <taxon>Ascomycota</taxon>
        <taxon>Taphrinomycotina</taxon>
        <taxon>Schizosaccharomycetes</taxon>
        <taxon>Schizosaccharomycetales</taxon>
        <taxon>Schizosaccharomycetaceae</taxon>
        <taxon>Schizosaccharomyces</taxon>
    </lineage>
</organism>
<evidence type="ECO:0000250" key="1"/>
<evidence type="ECO:0000269" key="2">
    <source>
    </source>
</evidence>
<evidence type="ECO:0000305" key="3"/>
<comment type="subcellular location">
    <subcellularLocation>
        <location evidence="2">Cytoplasm</location>
    </subcellularLocation>
    <subcellularLocation>
        <location evidence="2">Nucleus</location>
    </subcellularLocation>
</comment>
<comment type="similarity">
    <text evidence="3">Belongs to the aldo/keto reductase family.</text>
</comment>
<feature type="chain" id="PRO_0000310314" description="Uncharacterized oxidoreductase P32A8.02">
    <location>
        <begin position="1"/>
        <end position="283"/>
    </location>
</feature>
<feature type="active site" description="Proton donor" evidence="1">
    <location>
        <position position="55"/>
    </location>
</feature>
<feature type="site" description="Lowers pKa of active site Tyr" evidence="1">
    <location>
        <position position="84"/>
    </location>
</feature>
<reference key="1">
    <citation type="journal article" date="2002" name="Nature">
        <title>The genome sequence of Schizosaccharomyces pombe.</title>
        <authorList>
            <person name="Wood V."/>
            <person name="Gwilliam R."/>
            <person name="Rajandream M.A."/>
            <person name="Lyne M.H."/>
            <person name="Lyne R."/>
            <person name="Stewart A."/>
            <person name="Sgouros J.G."/>
            <person name="Peat N."/>
            <person name="Hayles J."/>
            <person name="Baker S.G."/>
            <person name="Basham D."/>
            <person name="Bowman S."/>
            <person name="Brooks K."/>
            <person name="Brown D."/>
            <person name="Brown S."/>
            <person name="Chillingworth T."/>
            <person name="Churcher C.M."/>
            <person name="Collins M."/>
            <person name="Connor R."/>
            <person name="Cronin A."/>
            <person name="Davis P."/>
            <person name="Feltwell T."/>
            <person name="Fraser A."/>
            <person name="Gentles S."/>
            <person name="Goble A."/>
            <person name="Hamlin N."/>
            <person name="Harris D.E."/>
            <person name="Hidalgo J."/>
            <person name="Hodgson G."/>
            <person name="Holroyd S."/>
            <person name="Hornsby T."/>
            <person name="Howarth S."/>
            <person name="Huckle E.J."/>
            <person name="Hunt S."/>
            <person name="Jagels K."/>
            <person name="James K.D."/>
            <person name="Jones L."/>
            <person name="Jones M."/>
            <person name="Leather S."/>
            <person name="McDonald S."/>
            <person name="McLean J."/>
            <person name="Mooney P."/>
            <person name="Moule S."/>
            <person name="Mungall K.L."/>
            <person name="Murphy L.D."/>
            <person name="Niblett D."/>
            <person name="Odell C."/>
            <person name="Oliver K."/>
            <person name="O'Neil S."/>
            <person name="Pearson D."/>
            <person name="Quail M.A."/>
            <person name="Rabbinowitsch E."/>
            <person name="Rutherford K.M."/>
            <person name="Rutter S."/>
            <person name="Saunders D."/>
            <person name="Seeger K."/>
            <person name="Sharp S."/>
            <person name="Skelton J."/>
            <person name="Simmonds M.N."/>
            <person name="Squares R."/>
            <person name="Squares S."/>
            <person name="Stevens K."/>
            <person name="Taylor K."/>
            <person name="Taylor R.G."/>
            <person name="Tivey A."/>
            <person name="Walsh S.V."/>
            <person name="Warren T."/>
            <person name="Whitehead S."/>
            <person name="Woodward J.R."/>
            <person name="Volckaert G."/>
            <person name="Aert R."/>
            <person name="Robben J."/>
            <person name="Grymonprez B."/>
            <person name="Weltjens I."/>
            <person name="Vanstreels E."/>
            <person name="Rieger M."/>
            <person name="Schaefer M."/>
            <person name="Mueller-Auer S."/>
            <person name="Gabel C."/>
            <person name="Fuchs M."/>
            <person name="Duesterhoeft A."/>
            <person name="Fritzc C."/>
            <person name="Holzer E."/>
            <person name="Moestl D."/>
            <person name="Hilbert H."/>
            <person name="Borzym K."/>
            <person name="Langer I."/>
            <person name="Beck A."/>
            <person name="Lehrach H."/>
            <person name="Reinhardt R."/>
            <person name="Pohl T.M."/>
            <person name="Eger P."/>
            <person name="Zimmermann W."/>
            <person name="Wedler H."/>
            <person name="Wambutt R."/>
            <person name="Purnelle B."/>
            <person name="Goffeau A."/>
            <person name="Cadieu E."/>
            <person name="Dreano S."/>
            <person name="Gloux S."/>
            <person name="Lelaure V."/>
            <person name="Mottier S."/>
            <person name="Galibert F."/>
            <person name="Aves S.J."/>
            <person name="Xiang Z."/>
            <person name="Hunt C."/>
            <person name="Moore K."/>
            <person name="Hurst S.M."/>
            <person name="Lucas M."/>
            <person name="Rochet M."/>
            <person name="Gaillardin C."/>
            <person name="Tallada V.A."/>
            <person name="Garzon A."/>
            <person name="Thode G."/>
            <person name="Daga R.R."/>
            <person name="Cruzado L."/>
            <person name="Jimenez J."/>
            <person name="Sanchez M."/>
            <person name="del Rey F."/>
            <person name="Benito J."/>
            <person name="Dominguez A."/>
            <person name="Revuelta J.L."/>
            <person name="Moreno S."/>
            <person name="Armstrong J."/>
            <person name="Forsburg S.L."/>
            <person name="Cerutti L."/>
            <person name="Lowe T."/>
            <person name="McCombie W.R."/>
            <person name="Paulsen I."/>
            <person name="Potashkin J."/>
            <person name="Shpakovski G.V."/>
            <person name="Ussery D."/>
            <person name="Barrell B.G."/>
            <person name="Nurse P."/>
        </authorList>
    </citation>
    <scope>NUCLEOTIDE SEQUENCE [LARGE SCALE GENOMIC DNA]</scope>
    <source>
        <strain>972 / ATCC 24843</strain>
    </source>
</reference>
<reference key="2">
    <citation type="journal article" date="2006" name="Nat. Biotechnol.">
        <title>ORFeome cloning and global analysis of protein localization in the fission yeast Schizosaccharomyces pombe.</title>
        <authorList>
            <person name="Matsuyama A."/>
            <person name="Arai R."/>
            <person name="Yashiroda Y."/>
            <person name="Shirai A."/>
            <person name="Kamata A."/>
            <person name="Sekido S."/>
            <person name="Kobayashi Y."/>
            <person name="Hashimoto A."/>
            <person name="Hamamoto M."/>
            <person name="Hiraoka Y."/>
            <person name="Horinouchi S."/>
            <person name="Yoshida M."/>
        </authorList>
    </citation>
    <scope>SUBCELLULAR LOCATION [LARGE SCALE ANALYSIS]</scope>
</reference>
<gene>
    <name type="ORF">SPAP32A8.02</name>
</gene>
<keyword id="KW-0963">Cytoplasm</keyword>
<keyword id="KW-0539">Nucleus</keyword>
<keyword id="KW-0560">Oxidoreductase</keyword>
<keyword id="KW-1185">Reference proteome</keyword>
<protein>
    <recommendedName>
        <fullName>Uncharacterized oxidoreductase P32A8.02</fullName>
        <ecNumber>1.-.-.-</ecNumber>
    </recommendedName>
</protein>
<dbReference type="EC" id="1.-.-.-"/>
<dbReference type="EMBL" id="CU329670">
    <property type="protein sequence ID" value="CAC29481.1"/>
    <property type="molecule type" value="Genomic_DNA"/>
</dbReference>
<dbReference type="RefSeq" id="NP_594178.1">
    <property type="nucleotide sequence ID" value="NM_001019602.2"/>
</dbReference>
<dbReference type="SMR" id="Q9C1X5"/>
<dbReference type="BioGRID" id="278081">
    <property type="interactions" value="18"/>
</dbReference>
<dbReference type="FunCoup" id="Q9C1X5">
    <property type="interactions" value="395"/>
</dbReference>
<dbReference type="STRING" id="284812.Q9C1X5"/>
<dbReference type="iPTMnet" id="Q9C1X5"/>
<dbReference type="PaxDb" id="4896-SPAP32A8.02.1"/>
<dbReference type="EnsemblFungi" id="SPAP32A8.02.1">
    <property type="protein sequence ID" value="SPAP32A8.02.1:pep"/>
    <property type="gene ID" value="SPAP32A8.02"/>
</dbReference>
<dbReference type="KEGG" id="spo:2541584"/>
<dbReference type="PomBase" id="SPAP32A8.02"/>
<dbReference type="VEuPathDB" id="FungiDB:SPAP32A8.02"/>
<dbReference type="eggNOG" id="KOG1577">
    <property type="taxonomic scope" value="Eukaryota"/>
</dbReference>
<dbReference type="HOGENOM" id="CLU_023205_0_1_1"/>
<dbReference type="InParanoid" id="Q9C1X5"/>
<dbReference type="OMA" id="YGNEDIC"/>
<dbReference type="PhylomeDB" id="Q9C1X5"/>
<dbReference type="PRO" id="PR:Q9C1X5"/>
<dbReference type="Proteomes" id="UP000002485">
    <property type="component" value="Chromosome I"/>
</dbReference>
<dbReference type="GO" id="GO:0005737">
    <property type="term" value="C:cytoplasm"/>
    <property type="evidence" value="ECO:0007005"/>
    <property type="project" value="PomBase"/>
</dbReference>
<dbReference type="GO" id="GO:0005829">
    <property type="term" value="C:cytosol"/>
    <property type="evidence" value="ECO:0007005"/>
    <property type="project" value="PomBase"/>
</dbReference>
<dbReference type="GO" id="GO:0005634">
    <property type="term" value="C:nucleus"/>
    <property type="evidence" value="ECO:0007005"/>
    <property type="project" value="PomBase"/>
</dbReference>
<dbReference type="GO" id="GO:0004032">
    <property type="term" value="F:aldose reductase (NADPH) activity"/>
    <property type="evidence" value="ECO:0000318"/>
    <property type="project" value="GO_Central"/>
</dbReference>
<dbReference type="GO" id="GO:0032866">
    <property type="term" value="F:D-xylose reductase (NADPH) activity"/>
    <property type="evidence" value="ECO:0000266"/>
    <property type="project" value="PomBase"/>
</dbReference>
<dbReference type="GO" id="GO:0032867">
    <property type="term" value="F:L-arabinose reductase (NADPH) activity"/>
    <property type="evidence" value="ECO:0000266"/>
    <property type="project" value="PomBase"/>
</dbReference>
<dbReference type="GO" id="GO:0019568">
    <property type="term" value="P:arabinose catabolic process"/>
    <property type="evidence" value="ECO:0000266"/>
    <property type="project" value="PomBase"/>
</dbReference>
<dbReference type="GO" id="GO:0042843">
    <property type="term" value="P:D-xylose catabolic process"/>
    <property type="evidence" value="ECO:0000266"/>
    <property type="project" value="PomBase"/>
</dbReference>
<dbReference type="CDD" id="cd19071">
    <property type="entry name" value="AKR_AKR1-5-like"/>
    <property type="match status" value="1"/>
</dbReference>
<dbReference type="FunFam" id="3.20.20.100:FF:000002">
    <property type="entry name" value="2,5-diketo-D-gluconic acid reductase A"/>
    <property type="match status" value="1"/>
</dbReference>
<dbReference type="Gene3D" id="3.20.20.100">
    <property type="entry name" value="NADP-dependent oxidoreductase domain"/>
    <property type="match status" value="1"/>
</dbReference>
<dbReference type="InterPro" id="IPR020471">
    <property type="entry name" value="AKR"/>
</dbReference>
<dbReference type="InterPro" id="IPR018170">
    <property type="entry name" value="Aldo/ket_reductase_CS"/>
</dbReference>
<dbReference type="InterPro" id="IPR023210">
    <property type="entry name" value="NADP_OxRdtase_dom"/>
</dbReference>
<dbReference type="InterPro" id="IPR036812">
    <property type="entry name" value="NADP_OxRdtase_dom_sf"/>
</dbReference>
<dbReference type="PANTHER" id="PTHR43827">
    <property type="entry name" value="2,5-DIKETO-D-GLUCONIC ACID REDUCTASE"/>
    <property type="match status" value="1"/>
</dbReference>
<dbReference type="PANTHER" id="PTHR43827:SF13">
    <property type="entry name" value="ALDO_KETO REDUCTASE FAMILY PROTEIN"/>
    <property type="match status" value="1"/>
</dbReference>
<dbReference type="Pfam" id="PF00248">
    <property type="entry name" value="Aldo_ket_red"/>
    <property type="match status" value="1"/>
</dbReference>
<dbReference type="PIRSF" id="PIRSF000097">
    <property type="entry name" value="AKR"/>
    <property type="match status" value="1"/>
</dbReference>
<dbReference type="PRINTS" id="PR00069">
    <property type="entry name" value="ALDKETRDTASE"/>
</dbReference>
<dbReference type="SUPFAM" id="SSF51430">
    <property type="entry name" value="NAD(P)-linked oxidoreductase"/>
    <property type="match status" value="1"/>
</dbReference>
<dbReference type="PROSITE" id="PS00798">
    <property type="entry name" value="ALDOKETO_REDUCTASE_1"/>
    <property type="match status" value="1"/>
</dbReference>
<dbReference type="PROSITE" id="PS00062">
    <property type="entry name" value="ALDOKETO_REDUCTASE_2"/>
    <property type="match status" value="1"/>
</dbReference>
<sequence length="283" mass="31832">MSESQTESTTVTLTNGMVIPRIGFGAFMLKYNECYGLVTQALDSGYRHIDTAAVYGNEDICGKAIVDWCEKNNVKRTDIFLTSKLANCSDYYSTRAAIRSSLHHLGTYIDLFLIQSPAGGKKSRIASWKAMEEFVDSGDIRSVGVSNYGVKHLQELYASNPKFYPCVNQIELHPFLSQDDIVKYCQSHDIAIEAYSPLTHGIRLNDEKLVPIAKKLNISVAQLLIRWSLQKGYIPIIKSTKKEHMLSDLDVFNFTIPDDVVQELSSFDEHWHAGTTYDPTVCD</sequence>
<accession>Q9C1X5</accession>